<keyword id="KW-0106">Calcium</keyword>
<keyword id="KW-0903">Direct protein sequencing</keyword>
<keyword id="KW-0479">Metal-binding</keyword>
<keyword id="KW-1185">Reference proteome</keyword>
<keyword id="KW-0964">Secreted</keyword>
<accession>P81869</accession>
<protein>
    <recommendedName>
        <fullName evidence="3">Otoconin-90</fullName>
        <shortName evidence="3">Oc90</shortName>
    </recommendedName>
</protein>
<organism>
    <name type="scientific">Cavia porcellus</name>
    <name type="common">Guinea pig</name>
    <dbReference type="NCBI Taxonomy" id="10141"/>
    <lineage>
        <taxon>Eukaryota</taxon>
        <taxon>Metazoa</taxon>
        <taxon>Chordata</taxon>
        <taxon>Craniata</taxon>
        <taxon>Vertebrata</taxon>
        <taxon>Euteleostomi</taxon>
        <taxon>Mammalia</taxon>
        <taxon>Eutheria</taxon>
        <taxon>Euarchontoglires</taxon>
        <taxon>Glires</taxon>
        <taxon>Rodentia</taxon>
        <taxon>Hystricomorpha</taxon>
        <taxon>Caviidae</taxon>
        <taxon>Cavia</taxon>
    </lineage>
</organism>
<gene>
    <name type="primary">OC90</name>
</gene>
<dbReference type="STRING" id="10141.ENSCPOP00000008104"/>
<dbReference type="InParanoid" id="P81869"/>
<dbReference type="Proteomes" id="UP000005447">
    <property type="component" value="Unassembled WGS sequence"/>
</dbReference>
<dbReference type="GO" id="GO:0005576">
    <property type="term" value="C:extracellular region"/>
    <property type="evidence" value="ECO:0007669"/>
    <property type="project" value="UniProtKB-SubCell"/>
</dbReference>
<dbReference type="GO" id="GO:0005509">
    <property type="term" value="F:calcium ion binding"/>
    <property type="evidence" value="ECO:0000250"/>
    <property type="project" value="UniProtKB"/>
</dbReference>
<dbReference type="GO" id="GO:0045299">
    <property type="term" value="P:otolith mineralization"/>
    <property type="evidence" value="ECO:0000250"/>
    <property type="project" value="UniProtKB"/>
</dbReference>
<sequence>HALDTPHFPQELTSALSKNICITFFSGMFKNVESVAEIFDSLGPSFKQDQA</sequence>
<name>OC90_CAVPO</name>
<reference key="1">
    <citation type="journal article" date="1998" name="Proc. Natl. Acad. Sci. U.S.A.">
        <title>Otoconin-90, the mammalian otoconial matrix protein, contains two domains of homology to secretory phospholipase A2.</title>
        <authorList>
            <person name="Wang Y."/>
            <person name="Kowalski P.E."/>
            <person name="Thalmann I."/>
            <person name="Ornitz D.M."/>
            <person name="Mager D.L."/>
            <person name="Thalmann R."/>
        </authorList>
    </citation>
    <scope>PROTEIN SEQUENCE</scope>
</reference>
<evidence type="ECO:0000250" key="1">
    <source>
        <dbReference type="UniProtKB" id="Q9Z0L3"/>
    </source>
</evidence>
<evidence type="ECO:0000269" key="2">
    <source>
    </source>
</evidence>
<evidence type="ECO:0000303" key="3">
    <source>
    </source>
</evidence>
<evidence type="ECO:0000305" key="4"/>
<feature type="chain" id="PRO_0000161727" description="Otoconin-90">
    <location>
        <begin position="1"/>
        <end position="51" status="greater than"/>
    </location>
</feature>
<feature type="non-terminal residue">
    <location>
        <position position="51"/>
    </location>
</feature>
<proteinExistence type="evidence at protein level"/>
<comment type="function">
    <text evidence="1">Major protein of the otoconia, a calcium carbonate structure in the saccule and utricle of the ear. Together with OTOL1, acts as a scaffold for otoconia biomineralization: sequesters calcium and forms interconnecting fibrils between otoconia that are incorporated into the calcium crystal structure. Together with OTOL1, modulates calcite crystal morphology and growth kinetics. It is unlikely that this protein has phospholipase A2 activity.</text>
</comment>
<comment type="subunit">
    <text evidence="1">Interacts with OTOL1.</text>
</comment>
<comment type="subcellular location">
    <subcellularLocation>
        <location evidence="2">Secreted</location>
    </subcellularLocation>
</comment>
<comment type="similarity">
    <text evidence="4">Belongs to the phospholipase A2 family.</text>
</comment>